<organism>
    <name type="scientific">Xenopus laevis</name>
    <name type="common">African clawed frog</name>
    <dbReference type="NCBI Taxonomy" id="8355"/>
    <lineage>
        <taxon>Eukaryota</taxon>
        <taxon>Metazoa</taxon>
        <taxon>Chordata</taxon>
        <taxon>Craniata</taxon>
        <taxon>Vertebrata</taxon>
        <taxon>Euteleostomi</taxon>
        <taxon>Amphibia</taxon>
        <taxon>Batrachia</taxon>
        <taxon>Anura</taxon>
        <taxon>Pipoidea</taxon>
        <taxon>Pipidae</taxon>
        <taxon>Xenopodinae</taxon>
        <taxon>Xenopus</taxon>
        <taxon>Xenopus</taxon>
    </lineage>
</organism>
<comment type="function">
    <text evidence="1">Microtubule-binding protein required to ensure proper cell division and nuclear envelope reassembly by sequestering the endoplasmic reticulum away from chromosomes during mitosis. Probably acts by clearing the endoplasmic reticulum membrane from metaphase chromosomes (By similarity).</text>
</comment>
<comment type="subcellular location">
    <subcellularLocation>
        <location evidence="1">Endoplasmic reticulum membrane</location>
        <topology evidence="1">Multi-pass membrane protein</topology>
    </subcellularLocation>
</comment>
<comment type="similarity">
    <text evidence="4">Belongs to the DP1 family.</text>
</comment>
<gene>
    <name type="primary">reep3-a</name>
    <name type="synonym">reep3</name>
</gene>
<protein>
    <recommendedName>
        <fullName>Receptor expression-enhancing protein 3-A</fullName>
    </recommendedName>
</protein>
<keyword id="KW-0131">Cell cycle</keyword>
<keyword id="KW-0132">Cell division</keyword>
<keyword id="KW-0256">Endoplasmic reticulum</keyword>
<keyword id="KW-0472">Membrane</keyword>
<keyword id="KW-0493">Microtubule</keyword>
<keyword id="KW-0498">Mitosis</keyword>
<keyword id="KW-1185">Reference proteome</keyword>
<keyword id="KW-0812">Transmembrane</keyword>
<keyword id="KW-1133">Transmembrane helix</keyword>
<name>REP3A_XENLA</name>
<feature type="chain" id="PRO_0000424021" description="Receptor expression-enhancing protein 3-A">
    <location>
        <begin position="1"/>
        <end position="263"/>
    </location>
</feature>
<feature type="transmembrane region" description="Helical" evidence="2">
    <location>
        <begin position="2"/>
        <end position="22"/>
    </location>
</feature>
<feature type="transmembrane region" description="Helical" evidence="2">
    <location>
        <begin position="35"/>
        <end position="55"/>
    </location>
</feature>
<feature type="region of interest" description="Disordered" evidence="3">
    <location>
        <begin position="161"/>
        <end position="228"/>
    </location>
</feature>
<feature type="region of interest" description="Disordered" evidence="3">
    <location>
        <begin position="240"/>
        <end position="263"/>
    </location>
</feature>
<feature type="compositionally biased region" description="Acidic residues" evidence="3">
    <location>
        <begin position="199"/>
        <end position="214"/>
    </location>
</feature>
<feature type="compositionally biased region" description="Basic residues" evidence="3">
    <location>
        <begin position="242"/>
        <end position="251"/>
    </location>
</feature>
<evidence type="ECO:0000250" key="1"/>
<evidence type="ECO:0000255" key="2"/>
<evidence type="ECO:0000256" key="3">
    <source>
        <dbReference type="SAM" id="MobiDB-lite"/>
    </source>
</evidence>
<evidence type="ECO:0000305" key="4"/>
<sequence>MVSWIICKAVVLVFGMLYPAYFSYKAVRTKNVKEYVRWMMYWIVFALYTVTEAIADLTLSWFPLYYELKIAFVVWLLSPYTRGASLLYRKFLHPLLSSKEKEIDDYIVQAKEKGYETMVHFGKQGLNLAANAAVTAAVKGQGAITERLRSFSMHDLTAVQGDETSENRPFATFPDGQKKARASVSDSSGFGSLRKDSGDDNTDEDVEVNSEDEVYTQKGLRRSQSMRSVKVIKGRKEIRYASLKHKPKKRPQLYFREDTAHHL</sequence>
<accession>Q6P418</accession>
<proteinExistence type="evidence at transcript level"/>
<dbReference type="EMBL" id="BC063730">
    <property type="protein sequence ID" value="AAH63730.1"/>
    <property type="molecule type" value="mRNA"/>
</dbReference>
<dbReference type="RefSeq" id="NP_001083678.1">
    <property type="nucleotide sequence ID" value="NM_001090209.1"/>
</dbReference>
<dbReference type="DNASU" id="399057"/>
<dbReference type="GeneID" id="399057"/>
<dbReference type="KEGG" id="xla:399057"/>
<dbReference type="AGR" id="Xenbase:XB-GENE-958750"/>
<dbReference type="CTD" id="399057"/>
<dbReference type="Xenbase" id="XB-GENE-958750">
    <property type="gene designation" value="reep3.L"/>
</dbReference>
<dbReference type="OMA" id="PIGQRHY"/>
<dbReference type="OrthoDB" id="434647at2759"/>
<dbReference type="Proteomes" id="UP000186698">
    <property type="component" value="Chromosome 7L"/>
</dbReference>
<dbReference type="Bgee" id="399057">
    <property type="expression patterns" value="Expressed in intestine and 19 other cell types or tissues"/>
</dbReference>
<dbReference type="GO" id="GO:0005881">
    <property type="term" value="C:cytoplasmic microtubule"/>
    <property type="evidence" value="ECO:0000318"/>
    <property type="project" value="GO_Central"/>
</dbReference>
<dbReference type="GO" id="GO:0005789">
    <property type="term" value="C:endoplasmic reticulum membrane"/>
    <property type="evidence" value="ECO:0000318"/>
    <property type="project" value="GO_Central"/>
</dbReference>
<dbReference type="GO" id="GO:0071782">
    <property type="term" value="C:endoplasmic reticulum tubular network"/>
    <property type="evidence" value="ECO:0000318"/>
    <property type="project" value="GO_Central"/>
</dbReference>
<dbReference type="GO" id="GO:0008017">
    <property type="term" value="F:microtubule binding"/>
    <property type="evidence" value="ECO:0000318"/>
    <property type="project" value="GO_Central"/>
</dbReference>
<dbReference type="GO" id="GO:0051301">
    <property type="term" value="P:cell division"/>
    <property type="evidence" value="ECO:0007669"/>
    <property type="project" value="UniProtKB-KW"/>
</dbReference>
<dbReference type="GO" id="GO:0071786">
    <property type="term" value="P:endoplasmic reticulum tubular network organization"/>
    <property type="evidence" value="ECO:0000318"/>
    <property type="project" value="GO_Central"/>
</dbReference>
<dbReference type="GO" id="GO:0007084">
    <property type="term" value="P:mitotic nuclear membrane reassembly"/>
    <property type="evidence" value="ECO:0000250"/>
    <property type="project" value="UniProtKB"/>
</dbReference>
<dbReference type="GO" id="GO:0006998">
    <property type="term" value="P:nuclear envelope organization"/>
    <property type="evidence" value="ECO:0000250"/>
    <property type="project" value="UniProtKB"/>
</dbReference>
<dbReference type="InterPro" id="IPR004345">
    <property type="entry name" value="TB2_DP1_HVA22"/>
</dbReference>
<dbReference type="PANTHER" id="PTHR12300">
    <property type="entry name" value="HVA22-LIKE PROTEINS"/>
    <property type="match status" value="1"/>
</dbReference>
<dbReference type="PANTHER" id="PTHR12300:SF39">
    <property type="entry name" value="RECEPTOR EXPRESSION-ENHANCING PROTEIN 3"/>
    <property type="match status" value="1"/>
</dbReference>
<dbReference type="Pfam" id="PF03134">
    <property type="entry name" value="TB2_DP1_HVA22"/>
    <property type="match status" value="1"/>
</dbReference>
<reference key="1">
    <citation type="submission" date="2003-12" db="EMBL/GenBank/DDBJ databases">
        <authorList>
            <consortium name="NIH - Xenopus Gene Collection (XGC) project"/>
        </authorList>
    </citation>
    <scope>NUCLEOTIDE SEQUENCE [LARGE SCALE MRNA]</scope>
    <source>
        <tissue>Spleen</tissue>
    </source>
</reference>